<keyword id="KW-0949">S-adenosyl-L-methionine</keyword>
<keyword id="KW-0808">Transferase</keyword>
<organism>
    <name type="scientific">Salmonella enteritidis PT4 (strain P125109)</name>
    <dbReference type="NCBI Taxonomy" id="550537"/>
    <lineage>
        <taxon>Bacteria</taxon>
        <taxon>Pseudomonadati</taxon>
        <taxon>Pseudomonadota</taxon>
        <taxon>Gammaproteobacteria</taxon>
        <taxon>Enterobacterales</taxon>
        <taxon>Enterobacteriaceae</taxon>
        <taxon>Salmonella</taxon>
    </lineage>
</organism>
<proteinExistence type="inferred from homology"/>
<protein>
    <recommendedName>
        <fullName evidence="1">Carboxy-S-adenosyl-L-methionine synthase</fullName>
        <shortName evidence="1">Cx-SAM synthase</shortName>
        <ecNumber evidence="1">2.1.3.-</ecNumber>
    </recommendedName>
</protein>
<gene>
    <name evidence="1" type="primary">cmoA</name>
    <name type="ordered locus">SEN1098</name>
</gene>
<dbReference type="EC" id="2.1.3.-" evidence="1"/>
<dbReference type="EMBL" id="AM933172">
    <property type="protein sequence ID" value="CAR32681.1"/>
    <property type="molecule type" value="Genomic_DNA"/>
</dbReference>
<dbReference type="RefSeq" id="WP_000019607.1">
    <property type="nucleotide sequence ID" value="NC_011294.1"/>
</dbReference>
<dbReference type="SMR" id="B5R146"/>
<dbReference type="KEGG" id="set:SEN1098"/>
<dbReference type="HOGENOM" id="CLU_078475_0_0_6"/>
<dbReference type="Proteomes" id="UP000000613">
    <property type="component" value="Chromosome"/>
</dbReference>
<dbReference type="GO" id="GO:0016743">
    <property type="term" value="F:carboxyl- or carbamoyltransferase activity"/>
    <property type="evidence" value="ECO:0007669"/>
    <property type="project" value="UniProtKB-UniRule"/>
</dbReference>
<dbReference type="GO" id="GO:1904047">
    <property type="term" value="F:S-adenosyl-L-methionine binding"/>
    <property type="evidence" value="ECO:0007669"/>
    <property type="project" value="UniProtKB-UniRule"/>
</dbReference>
<dbReference type="GO" id="GO:0002098">
    <property type="term" value="P:tRNA wobble uridine modification"/>
    <property type="evidence" value="ECO:0007669"/>
    <property type="project" value="InterPro"/>
</dbReference>
<dbReference type="CDD" id="cd02440">
    <property type="entry name" value="AdoMet_MTases"/>
    <property type="match status" value="1"/>
</dbReference>
<dbReference type="FunFam" id="3.40.50.150:FF:000030">
    <property type="entry name" value="Carboxy-S-adenosyl-L-methionine synthase"/>
    <property type="match status" value="1"/>
</dbReference>
<dbReference type="Gene3D" id="3.40.50.150">
    <property type="entry name" value="Vaccinia Virus protein VP39"/>
    <property type="match status" value="1"/>
</dbReference>
<dbReference type="HAMAP" id="MF_01589">
    <property type="entry name" value="Cx_SAM_synthase"/>
    <property type="match status" value="1"/>
</dbReference>
<dbReference type="InterPro" id="IPR005271">
    <property type="entry name" value="CmoA"/>
</dbReference>
<dbReference type="InterPro" id="IPR041698">
    <property type="entry name" value="Methyltransf_25"/>
</dbReference>
<dbReference type="InterPro" id="IPR029063">
    <property type="entry name" value="SAM-dependent_MTases_sf"/>
</dbReference>
<dbReference type="NCBIfam" id="TIGR00740">
    <property type="entry name" value="carboxy-S-adenosyl-L-methionine synthase CmoA"/>
    <property type="match status" value="1"/>
</dbReference>
<dbReference type="NCBIfam" id="NF011995">
    <property type="entry name" value="PRK15451.1"/>
    <property type="match status" value="1"/>
</dbReference>
<dbReference type="PANTHER" id="PTHR43861:SF2">
    <property type="entry name" value="CARBOXY-S-ADENOSYL-L-METHIONINE SYNTHASE"/>
    <property type="match status" value="1"/>
</dbReference>
<dbReference type="PANTHER" id="PTHR43861">
    <property type="entry name" value="TRANS-ACONITATE 2-METHYLTRANSFERASE-RELATED"/>
    <property type="match status" value="1"/>
</dbReference>
<dbReference type="Pfam" id="PF13649">
    <property type="entry name" value="Methyltransf_25"/>
    <property type="match status" value="1"/>
</dbReference>
<dbReference type="PIRSF" id="PIRSF006325">
    <property type="entry name" value="MeTrfase_bac"/>
    <property type="match status" value="1"/>
</dbReference>
<dbReference type="SUPFAM" id="SSF53335">
    <property type="entry name" value="S-adenosyl-L-methionine-dependent methyltransferases"/>
    <property type="match status" value="1"/>
</dbReference>
<accession>B5R146</accession>
<name>CMOA_SALEP</name>
<sequence>MSHRDTLFSAPIARLGDWTFDERVAEVFPDMIQRSVPGYSNIISMIGMLAERFVQPNTQVYDLGCSLGAATLSVRRNIRHEHCRIIAVDNSPAMIERCRRHIDAYKAPTPVEVVEGDIRDITIENASMVVLNFTLQFLEPAERQALLDKIYLGLNPGGALVLSEKFSFEDAKVGELLFNMHHDFKRANGYSELEISQKRSMLENVMLTDSVETHKARLRKAGFEHSELWFQCFNFGSLVALKAGVAA</sequence>
<reference key="1">
    <citation type="journal article" date="2008" name="Genome Res.">
        <title>Comparative genome analysis of Salmonella enteritidis PT4 and Salmonella gallinarum 287/91 provides insights into evolutionary and host adaptation pathways.</title>
        <authorList>
            <person name="Thomson N.R."/>
            <person name="Clayton D.J."/>
            <person name="Windhorst D."/>
            <person name="Vernikos G."/>
            <person name="Davidson S."/>
            <person name="Churcher C."/>
            <person name="Quail M.A."/>
            <person name="Stevens M."/>
            <person name="Jones M.A."/>
            <person name="Watson M."/>
            <person name="Barron A."/>
            <person name="Layton A."/>
            <person name="Pickard D."/>
            <person name="Kingsley R.A."/>
            <person name="Bignell A."/>
            <person name="Clark L."/>
            <person name="Harris B."/>
            <person name="Ormond D."/>
            <person name="Abdellah Z."/>
            <person name="Brooks K."/>
            <person name="Cherevach I."/>
            <person name="Chillingworth T."/>
            <person name="Woodward J."/>
            <person name="Norberczak H."/>
            <person name="Lord A."/>
            <person name="Arrowsmith C."/>
            <person name="Jagels K."/>
            <person name="Moule S."/>
            <person name="Mungall K."/>
            <person name="Saunders M."/>
            <person name="Whitehead S."/>
            <person name="Chabalgoity J.A."/>
            <person name="Maskell D."/>
            <person name="Humphreys T."/>
            <person name="Roberts M."/>
            <person name="Barrow P.A."/>
            <person name="Dougan G."/>
            <person name="Parkhill J."/>
        </authorList>
    </citation>
    <scope>NUCLEOTIDE SEQUENCE [LARGE SCALE GENOMIC DNA]</scope>
    <source>
        <strain>P125109</strain>
    </source>
</reference>
<comment type="function">
    <text evidence="1">Catalyzes the conversion of S-adenosyl-L-methionine (SAM) to carboxy-S-adenosyl-L-methionine (Cx-SAM).</text>
</comment>
<comment type="catalytic activity">
    <reaction evidence="1">
        <text>prephenate + S-adenosyl-L-methionine = carboxy-S-adenosyl-L-methionine + 3-phenylpyruvate + H2O</text>
        <dbReference type="Rhea" id="RHEA:51692"/>
        <dbReference type="ChEBI" id="CHEBI:15377"/>
        <dbReference type="ChEBI" id="CHEBI:18005"/>
        <dbReference type="ChEBI" id="CHEBI:29934"/>
        <dbReference type="ChEBI" id="CHEBI:59789"/>
        <dbReference type="ChEBI" id="CHEBI:134278"/>
    </reaction>
</comment>
<comment type="subunit">
    <text evidence="1">Homodimer.</text>
</comment>
<comment type="similarity">
    <text evidence="1">Belongs to the class I-like SAM-binding methyltransferase superfamily. Cx-SAM synthase family.</text>
</comment>
<feature type="chain" id="PRO_1000201363" description="Carboxy-S-adenosyl-L-methionine synthase">
    <location>
        <begin position="1"/>
        <end position="247"/>
    </location>
</feature>
<feature type="binding site" evidence="1">
    <location>
        <position position="39"/>
    </location>
    <ligand>
        <name>S-adenosyl-L-methionine</name>
        <dbReference type="ChEBI" id="CHEBI:59789"/>
    </ligand>
</feature>
<feature type="binding site" evidence="1">
    <location>
        <begin position="64"/>
        <end position="66"/>
    </location>
    <ligand>
        <name>S-adenosyl-L-methionine</name>
        <dbReference type="ChEBI" id="CHEBI:59789"/>
    </ligand>
</feature>
<feature type="binding site" evidence="1">
    <location>
        <begin position="89"/>
        <end position="90"/>
    </location>
    <ligand>
        <name>S-adenosyl-L-methionine</name>
        <dbReference type="ChEBI" id="CHEBI:59789"/>
    </ligand>
</feature>
<feature type="binding site" evidence="1">
    <location>
        <begin position="117"/>
        <end position="118"/>
    </location>
    <ligand>
        <name>S-adenosyl-L-methionine</name>
        <dbReference type="ChEBI" id="CHEBI:59789"/>
    </ligand>
</feature>
<feature type="binding site" evidence="1">
    <location>
        <position position="132"/>
    </location>
    <ligand>
        <name>S-adenosyl-L-methionine</name>
        <dbReference type="ChEBI" id="CHEBI:59789"/>
    </ligand>
</feature>
<feature type="binding site" evidence="1">
    <location>
        <position position="199"/>
    </location>
    <ligand>
        <name>S-adenosyl-L-methionine</name>
        <dbReference type="ChEBI" id="CHEBI:59789"/>
    </ligand>
</feature>
<evidence type="ECO:0000255" key="1">
    <source>
        <dbReference type="HAMAP-Rule" id="MF_01589"/>
    </source>
</evidence>